<dbReference type="EMBL" id="U88888">
    <property type="protein sequence ID" value="AAC05443.1"/>
    <property type="molecule type" value="Genomic_DNA"/>
</dbReference>
<dbReference type="EMBL" id="CP001878">
    <property type="protein sequence ID" value="ADC48448.1"/>
    <property type="molecule type" value="Genomic_DNA"/>
</dbReference>
<dbReference type="RefSeq" id="WP_012959726.1">
    <property type="nucleotide sequence ID" value="NC_013791.2"/>
</dbReference>
<dbReference type="SMR" id="O66042"/>
<dbReference type="STRING" id="398511.BpOF4_01905"/>
<dbReference type="KEGG" id="bpf:BpOF4_01905"/>
<dbReference type="eggNOG" id="COG4862">
    <property type="taxonomic scope" value="Bacteria"/>
</dbReference>
<dbReference type="HOGENOM" id="CLU_071496_2_1_9"/>
<dbReference type="Proteomes" id="UP000001544">
    <property type="component" value="Chromosome"/>
</dbReference>
<dbReference type="GO" id="GO:0030674">
    <property type="term" value="F:protein-macromolecule adaptor activity"/>
    <property type="evidence" value="ECO:0007669"/>
    <property type="project" value="UniProtKB-UniRule"/>
</dbReference>
<dbReference type="GO" id="GO:0030420">
    <property type="term" value="P:establishment of competence for transformation"/>
    <property type="evidence" value="ECO:0007669"/>
    <property type="project" value="UniProtKB-KW"/>
</dbReference>
<dbReference type="GO" id="GO:0045808">
    <property type="term" value="P:negative regulation of establishment of competence for transformation"/>
    <property type="evidence" value="ECO:0007669"/>
    <property type="project" value="UniProtKB-UniRule"/>
</dbReference>
<dbReference type="GO" id="GO:0042174">
    <property type="term" value="P:negative regulation of sporulation resulting in formation of a cellular spore"/>
    <property type="evidence" value="ECO:0007669"/>
    <property type="project" value="UniProtKB-UniRule"/>
</dbReference>
<dbReference type="GO" id="GO:0030435">
    <property type="term" value="P:sporulation resulting in formation of a cellular spore"/>
    <property type="evidence" value="ECO:0007669"/>
    <property type="project" value="UniProtKB-KW"/>
</dbReference>
<dbReference type="Gene3D" id="3.30.70.1950">
    <property type="match status" value="1"/>
</dbReference>
<dbReference type="HAMAP" id="MF_01124">
    <property type="entry name" value="MecA"/>
    <property type="match status" value="1"/>
</dbReference>
<dbReference type="InterPro" id="IPR038471">
    <property type="entry name" value="MecA_C_sf"/>
</dbReference>
<dbReference type="InterPro" id="IPR008681">
    <property type="entry name" value="Neg-reg_MecA"/>
</dbReference>
<dbReference type="NCBIfam" id="NF002644">
    <property type="entry name" value="PRK02315.1-5"/>
    <property type="match status" value="1"/>
</dbReference>
<dbReference type="PANTHER" id="PTHR39161">
    <property type="entry name" value="ADAPTER PROTEIN MECA"/>
    <property type="match status" value="1"/>
</dbReference>
<dbReference type="PANTHER" id="PTHR39161:SF1">
    <property type="entry name" value="ADAPTER PROTEIN MECA 1"/>
    <property type="match status" value="1"/>
</dbReference>
<dbReference type="Pfam" id="PF05389">
    <property type="entry name" value="MecA"/>
    <property type="match status" value="1"/>
</dbReference>
<dbReference type="PIRSF" id="PIRSF029008">
    <property type="entry name" value="MecA"/>
    <property type="match status" value="1"/>
</dbReference>
<protein>
    <recommendedName>
        <fullName evidence="1">Adapter protein MecA</fullName>
    </recommendedName>
</protein>
<accession>O66042</accession>
<accession>D3FV22</accession>
<reference key="1">
    <citation type="journal article" date="1998" name="Biochim. Biophys. Acta">
        <title>Cloning of the Bacillus firmus OF4 cls gene and characterization of its gene product.</title>
        <authorList>
            <person name="Guo D."/>
            <person name="Tropp B.E."/>
        </authorList>
    </citation>
    <scope>NUCLEOTIDE SEQUENCE [GENOMIC DNA]</scope>
</reference>
<reference key="2">
    <citation type="journal article" date="2011" name="Environ. Microbiol.">
        <title>Genome of alkaliphilic Bacillus pseudofirmus OF4 reveals adaptations that support the ability to grow in an external pH range from 7.5 to 11.4.</title>
        <authorList>
            <person name="Janto B."/>
            <person name="Ahmed A."/>
            <person name="Ito M."/>
            <person name="Liu J."/>
            <person name="Hicks D.B."/>
            <person name="Pagni S."/>
            <person name="Fackelmayer O.J."/>
            <person name="Smith T.A."/>
            <person name="Earl J."/>
            <person name="Elbourne L.D."/>
            <person name="Hassan K."/>
            <person name="Paulsen I.T."/>
            <person name="Kolsto A.B."/>
            <person name="Tourasse N.J."/>
            <person name="Ehrlich G.D."/>
            <person name="Boissy R."/>
            <person name="Ivey D.M."/>
            <person name="Li G."/>
            <person name="Xue Y."/>
            <person name="Ma Y."/>
            <person name="Hu F.Z."/>
            <person name="Krulwich T.A."/>
        </authorList>
    </citation>
    <scope>NUCLEOTIDE SEQUENCE [LARGE SCALE GENOMIC DNA]</scope>
    <source>
        <strain>ATCC BAA-2126 / JCM 17055 / OF4</strain>
    </source>
</reference>
<proteinExistence type="inferred from homology"/>
<keyword id="KW-0178">Competence</keyword>
<keyword id="KW-1185">Reference proteome</keyword>
<keyword id="KW-0749">Sporulation</keyword>
<comment type="function">
    <text evidence="1">Enables the recognition and targeting of unfolded and aggregated proteins to the ClpC protease or to other proteins involved in proteolysis. Acts negatively in the development of competence by binding ComK and recruiting it to the ClpCP protease. When overexpressed, inhibits sporulation. Also involved in Spx degradation by ClpC.</text>
</comment>
<comment type="subunit">
    <text evidence="1">Homodimer.</text>
</comment>
<comment type="domain">
    <text>The N-terminal domain has binding sites for ComK and probably for unfolded/aggregated proteins; the C-terminal domain interacts with ClpC.</text>
</comment>
<comment type="similarity">
    <text evidence="1">Belongs to the MecA family.</text>
</comment>
<gene>
    <name evidence="1" type="primary">mecA</name>
    <name type="ordered locus">BpOF4_01905</name>
</gene>
<feature type="chain" id="PRO_0000212266" description="Adapter protein MecA">
    <location>
        <begin position="1"/>
        <end position="217"/>
    </location>
</feature>
<sequence length="217" mass="25758">MDIERVNDTTIKFFITYKDIEDRGFDRDEIWYNRERGEELFFEMMNEANDRDEFELDGPLWIQVHALDKGLEIVVTRGQVSDGNVKLEIPVSQDKENTDENIVDLMTGHSSEDDEGIDTDQLEIVIGFNDFEDIISLSHNFFIDDLENELYHFEGRYYLHVLFNDDQYNEDEQDDMLSQMLEYGYETDLSIHRMQEYGKEIIGEYALKHLRGHFPQN</sequence>
<evidence type="ECO:0000255" key="1">
    <source>
        <dbReference type="HAMAP-Rule" id="MF_01124"/>
    </source>
</evidence>
<organism>
    <name type="scientific">Alkalihalophilus pseudofirmus (strain ATCC BAA-2126 / JCM 17055 / OF4)</name>
    <name type="common">Bacillus pseudofirmus</name>
    <dbReference type="NCBI Taxonomy" id="398511"/>
    <lineage>
        <taxon>Bacteria</taxon>
        <taxon>Bacillati</taxon>
        <taxon>Bacillota</taxon>
        <taxon>Bacilli</taxon>
        <taxon>Bacillales</taxon>
        <taxon>Bacillaceae</taxon>
        <taxon>Alkalihalophilus</taxon>
    </lineage>
</organism>
<name>MECA_ALKPO</name>